<accession>G5EBF1</accession>
<accession>H2KYQ9</accession>
<keyword id="KW-0025">Alternative splicing</keyword>
<keyword id="KW-1015">Disulfide bond</keyword>
<keyword id="KW-0393">Immunoglobulin domain</keyword>
<keyword id="KW-0472">Membrane</keyword>
<keyword id="KW-1185">Reference proteome</keyword>
<keyword id="KW-0677">Repeat</keyword>
<keyword id="KW-0732">Signal</keyword>
<keyword id="KW-0812">Transmembrane</keyword>
<keyword id="KW-1133">Transmembrane helix</keyword>
<organism>
    <name type="scientific">Caenorhabditis elegans</name>
    <dbReference type="NCBI Taxonomy" id="6239"/>
    <lineage>
        <taxon>Eukaryota</taxon>
        <taxon>Metazoa</taxon>
        <taxon>Ecdysozoa</taxon>
        <taxon>Nematoda</taxon>
        <taxon>Chromadorea</taxon>
        <taxon>Rhabditida</taxon>
        <taxon>Rhabditina</taxon>
        <taxon>Rhabditomorpha</taxon>
        <taxon>Rhabditoidea</taxon>
        <taxon>Rhabditidae</taxon>
        <taxon>Peloderinae</taxon>
        <taxon>Caenorhabditis</taxon>
    </lineage>
</organism>
<comment type="function">
    <text evidence="5 7">Required to confine migrating sex myoblasts to the ventral muscle quadrants during their migration through the body and for multiple aspects of sensory, motor, and interneuron axon guidance.</text>
</comment>
<comment type="subcellular location">
    <subcellularLocation>
        <location evidence="8">Membrane</location>
        <topology evidence="8">Single-pass membrane protein</topology>
    </subcellularLocation>
</comment>
<comment type="alternative products">
    <event type="alternative splicing"/>
    <isoform>
        <id>G5EBF1-1</id>
        <name evidence="10">b</name>
        <sequence type="displayed"/>
    </isoform>
    <isoform>
        <id>G5EBF1-2</id>
        <name evidence="9">a</name>
        <sequence type="described" ref="VSP_060409"/>
    </isoform>
</comment>
<comment type="tissue specificity">
    <text evidence="6">Expressed in the AVG interneuron and the male-specific sensory neuron HOA.</text>
</comment>
<comment type="similarity">
    <text evidence="8">Belongs to the immunoglobulin superfamily. ROBO/SAX3 family.</text>
</comment>
<name>SAX3_CAEEL</name>
<gene>
    <name evidence="10" type="primary">sax-3</name>
    <name evidence="10" type="ORF">ZK377.2</name>
</gene>
<feature type="signal peptide" evidence="1">
    <location>
        <begin position="1"/>
        <end position="23"/>
    </location>
</feature>
<feature type="chain" id="PRO_0000420957" description="Protein sax-3">
    <location>
        <begin position="24"/>
        <end position="1273"/>
    </location>
</feature>
<feature type="transmembrane region" description="Helical" evidence="1">
    <location>
        <begin position="874"/>
        <end position="894"/>
    </location>
</feature>
<feature type="domain" description="Ig-like C2-type 1">
    <location>
        <begin position="31"/>
        <end position="127"/>
    </location>
</feature>
<feature type="domain" description="Ig-like C2-type 2">
    <location>
        <begin position="133"/>
        <end position="222"/>
    </location>
</feature>
<feature type="domain" description="Ig-like C2-type 3">
    <location>
        <begin position="227"/>
        <end position="312"/>
    </location>
</feature>
<feature type="domain" description="Ig-like C2-type 4">
    <location>
        <begin position="317"/>
        <end position="411"/>
    </location>
</feature>
<feature type="domain" description="Ig-like C2-type 5">
    <location>
        <begin position="425"/>
        <end position="511"/>
    </location>
</feature>
<feature type="domain" description="Fibronectin type-III 1" evidence="3">
    <location>
        <begin position="533"/>
        <end position="628"/>
    </location>
</feature>
<feature type="domain" description="Fibronectin type-III 2" evidence="3">
    <location>
        <begin position="653"/>
        <end position="750"/>
    </location>
</feature>
<feature type="domain" description="Fibronectin type-III 3" evidence="3">
    <location>
        <begin position="755"/>
        <end position="849"/>
    </location>
</feature>
<feature type="region of interest" description="Disordered" evidence="4">
    <location>
        <begin position="1033"/>
        <end position="1273"/>
    </location>
</feature>
<feature type="compositionally biased region" description="Pro residues" evidence="4">
    <location>
        <begin position="1037"/>
        <end position="1046"/>
    </location>
</feature>
<feature type="compositionally biased region" description="Polar residues" evidence="4">
    <location>
        <begin position="1096"/>
        <end position="1105"/>
    </location>
</feature>
<feature type="compositionally biased region" description="Basic and acidic residues" evidence="4">
    <location>
        <begin position="1106"/>
        <end position="1115"/>
    </location>
</feature>
<feature type="compositionally biased region" description="Pro residues" evidence="4">
    <location>
        <begin position="1125"/>
        <end position="1136"/>
    </location>
</feature>
<feature type="compositionally biased region" description="Polar residues" evidence="4">
    <location>
        <begin position="1145"/>
        <end position="1156"/>
    </location>
</feature>
<feature type="compositionally biased region" description="Acidic residues" evidence="4">
    <location>
        <begin position="1207"/>
        <end position="1222"/>
    </location>
</feature>
<feature type="compositionally biased region" description="Polar residues" evidence="4">
    <location>
        <begin position="1240"/>
        <end position="1273"/>
    </location>
</feature>
<feature type="disulfide bond" evidence="2">
    <location>
        <begin position="52"/>
        <end position="110"/>
    </location>
</feature>
<feature type="disulfide bond" evidence="2">
    <location>
        <begin position="154"/>
        <end position="205"/>
    </location>
</feature>
<feature type="disulfide bond" evidence="2">
    <location>
        <begin position="248"/>
        <end position="296"/>
    </location>
</feature>
<feature type="disulfide bond" evidence="2">
    <location>
        <begin position="338"/>
        <end position="393"/>
    </location>
</feature>
<feature type="disulfide bond" evidence="2">
    <location>
        <begin position="446"/>
        <end position="495"/>
    </location>
</feature>
<feature type="splice variant" id="VSP_060409" description="In isoform a." evidence="8">
    <location>
        <begin position="1142"/>
        <end position="1145"/>
    </location>
</feature>
<dbReference type="EMBL" id="AF041053">
    <property type="protein sequence ID" value="AAC38848.1"/>
    <property type="molecule type" value="mRNA"/>
</dbReference>
<dbReference type="EMBL" id="BX284606">
    <property type="protein sequence ID" value="CCD64328.1"/>
    <property type="molecule type" value="Genomic_DNA"/>
</dbReference>
<dbReference type="EMBL" id="BX284606">
    <property type="protein sequence ID" value="CCD64327.1"/>
    <property type="molecule type" value="Genomic_DNA"/>
</dbReference>
<dbReference type="PIR" id="T42405">
    <property type="entry name" value="T42405"/>
</dbReference>
<dbReference type="RefSeq" id="NP_001024990.1">
    <molecule id="G5EBF1-1"/>
    <property type="nucleotide sequence ID" value="NM_001029819.7"/>
</dbReference>
<dbReference type="RefSeq" id="NP_741748.2">
    <molecule id="G5EBF1-2"/>
    <property type="nucleotide sequence ID" value="NM_171652.8"/>
</dbReference>
<dbReference type="SMR" id="G5EBF1"/>
<dbReference type="BioGRID" id="45576">
    <property type="interactions" value="32"/>
</dbReference>
<dbReference type="FunCoup" id="G5EBF1">
    <property type="interactions" value="1644"/>
</dbReference>
<dbReference type="STRING" id="6239.ZK377.2b.1"/>
<dbReference type="PaxDb" id="6239-ZK377.2b"/>
<dbReference type="PeptideAtlas" id="G5EBF1"/>
<dbReference type="EnsemblMetazoa" id="ZK377.2a.1">
    <molecule id="G5EBF1-2"/>
    <property type="protein sequence ID" value="ZK377.2a.1"/>
    <property type="gene ID" value="WBGene00004729"/>
</dbReference>
<dbReference type="EnsemblMetazoa" id="ZK377.2b.1">
    <molecule id="G5EBF1-1"/>
    <property type="protein sequence ID" value="ZK377.2b.1"/>
    <property type="gene ID" value="WBGene00004729"/>
</dbReference>
<dbReference type="GeneID" id="180637"/>
<dbReference type="KEGG" id="cel:CELE_ZK377.2"/>
<dbReference type="AGR" id="WB:WBGene00004729"/>
<dbReference type="CTD" id="180637"/>
<dbReference type="WormBase" id="ZK377.2a">
    <molecule id="G5EBF1-2"/>
    <property type="protein sequence ID" value="CE25688"/>
    <property type="gene ID" value="WBGene00004729"/>
    <property type="gene designation" value="sax-3"/>
</dbReference>
<dbReference type="WormBase" id="ZK377.2b">
    <molecule id="G5EBF1-1"/>
    <property type="protein sequence ID" value="CE31267"/>
    <property type="gene ID" value="WBGene00004729"/>
    <property type="gene designation" value="sax-3"/>
</dbReference>
<dbReference type="eggNOG" id="KOG4222">
    <property type="taxonomic scope" value="Eukaryota"/>
</dbReference>
<dbReference type="GeneTree" id="ENSGT00940000167162"/>
<dbReference type="HOGENOM" id="CLU_003227_0_0_1"/>
<dbReference type="InParanoid" id="G5EBF1"/>
<dbReference type="OMA" id="QDTLEKH"/>
<dbReference type="OrthoDB" id="428111at2759"/>
<dbReference type="PhylomeDB" id="G5EBF1"/>
<dbReference type="Reactome" id="R-CEL-376176">
    <property type="pathway name" value="Signaling by ROBO receptors"/>
</dbReference>
<dbReference type="PRO" id="PR:G5EBF1"/>
<dbReference type="Proteomes" id="UP000001940">
    <property type="component" value="Chromosome X"/>
</dbReference>
<dbReference type="Bgee" id="WBGene00004729">
    <property type="expression patterns" value="Expressed in pharyngeal muscle cell (C elegans) and 4 other cell types or tissues"/>
</dbReference>
<dbReference type="GO" id="GO:0030424">
    <property type="term" value="C:axon"/>
    <property type="evidence" value="ECO:0000318"/>
    <property type="project" value="GO_Central"/>
</dbReference>
<dbReference type="GO" id="GO:0005829">
    <property type="term" value="C:cytosol"/>
    <property type="evidence" value="ECO:0000304"/>
    <property type="project" value="Reactome"/>
</dbReference>
<dbReference type="GO" id="GO:0005886">
    <property type="term" value="C:plasma membrane"/>
    <property type="evidence" value="ECO:0000314"/>
    <property type="project" value="WormBase"/>
</dbReference>
<dbReference type="GO" id="GO:0008046">
    <property type="term" value="F:axon guidance receptor activity"/>
    <property type="evidence" value="ECO:0000314"/>
    <property type="project" value="WormBase"/>
</dbReference>
<dbReference type="GO" id="GO:0007411">
    <property type="term" value="P:axon guidance"/>
    <property type="evidence" value="ECO:0000318"/>
    <property type="project" value="GO_Central"/>
</dbReference>
<dbReference type="GO" id="GO:0098609">
    <property type="term" value="P:cell-cell adhesion"/>
    <property type="evidence" value="ECO:0000318"/>
    <property type="project" value="GO_Central"/>
</dbReference>
<dbReference type="GO" id="GO:0033563">
    <property type="term" value="P:dorsal/ventral axon guidance"/>
    <property type="evidence" value="ECO:0000315"/>
    <property type="project" value="WormBase"/>
</dbReference>
<dbReference type="GO" id="GO:0001764">
    <property type="term" value="P:neuron migration"/>
    <property type="evidence" value="ECO:0000315"/>
    <property type="project" value="WormBase"/>
</dbReference>
<dbReference type="GO" id="GO:1905489">
    <property type="term" value="P:regulation of sensory neuron axon guidance"/>
    <property type="evidence" value="ECO:0000316"/>
    <property type="project" value="UniProtKB"/>
</dbReference>
<dbReference type="GO" id="GO:0035385">
    <property type="term" value="P:Roundabout signaling pathway"/>
    <property type="evidence" value="ECO:0000250"/>
    <property type="project" value="WormBase"/>
</dbReference>
<dbReference type="GO" id="GO:0097374">
    <property type="term" value="P:sensory neuron axon guidance"/>
    <property type="evidence" value="ECO:0000315"/>
    <property type="project" value="UniProtKB"/>
</dbReference>
<dbReference type="CDD" id="cd00063">
    <property type="entry name" value="FN3"/>
    <property type="match status" value="3"/>
</dbReference>
<dbReference type="CDD" id="cd05724">
    <property type="entry name" value="IgI_2_Robo"/>
    <property type="match status" value="1"/>
</dbReference>
<dbReference type="FunFam" id="2.60.40.10:FF:002530">
    <property type="entry name" value="CBN-SAX-3 protein"/>
    <property type="match status" value="1"/>
</dbReference>
<dbReference type="FunFam" id="2.60.40.10:FF:003320">
    <property type="entry name" value="CBN-SAX-3 protein"/>
    <property type="match status" value="1"/>
</dbReference>
<dbReference type="FunFam" id="2.60.40.10:FF:000189">
    <property type="entry name" value="Neogenin isoform 3"/>
    <property type="match status" value="1"/>
</dbReference>
<dbReference type="FunFam" id="2.60.40.10:FF:000032">
    <property type="entry name" value="palladin isoform X1"/>
    <property type="match status" value="1"/>
</dbReference>
<dbReference type="FunFam" id="2.60.40.10:FF:003069">
    <property type="entry name" value="Protein sax-3"/>
    <property type="match status" value="1"/>
</dbReference>
<dbReference type="FunFam" id="2.60.40.10:FF:000008">
    <property type="entry name" value="roundabout homolog 2 isoform X2"/>
    <property type="match status" value="2"/>
</dbReference>
<dbReference type="Gene3D" id="2.60.40.10">
    <property type="entry name" value="Immunoglobulins"/>
    <property type="match status" value="8"/>
</dbReference>
<dbReference type="InterPro" id="IPR003961">
    <property type="entry name" value="FN3_dom"/>
</dbReference>
<dbReference type="InterPro" id="IPR036116">
    <property type="entry name" value="FN3_sf"/>
</dbReference>
<dbReference type="InterPro" id="IPR007110">
    <property type="entry name" value="Ig-like_dom"/>
</dbReference>
<dbReference type="InterPro" id="IPR036179">
    <property type="entry name" value="Ig-like_dom_sf"/>
</dbReference>
<dbReference type="InterPro" id="IPR013783">
    <property type="entry name" value="Ig-like_fold"/>
</dbReference>
<dbReference type="InterPro" id="IPR013098">
    <property type="entry name" value="Ig_I-set"/>
</dbReference>
<dbReference type="InterPro" id="IPR003599">
    <property type="entry name" value="Ig_sub"/>
</dbReference>
<dbReference type="InterPro" id="IPR003598">
    <property type="entry name" value="Ig_sub2"/>
</dbReference>
<dbReference type="InterPro" id="IPR013106">
    <property type="entry name" value="Ig_V-set"/>
</dbReference>
<dbReference type="PANTHER" id="PTHR10075">
    <property type="entry name" value="BASIGIN RELATED"/>
    <property type="match status" value="1"/>
</dbReference>
<dbReference type="PANTHER" id="PTHR10075:SF100">
    <property type="entry name" value="FASCICLIN-2"/>
    <property type="match status" value="1"/>
</dbReference>
<dbReference type="Pfam" id="PF00041">
    <property type="entry name" value="fn3"/>
    <property type="match status" value="3"/>
</dbReference>
<dbReference type="Pfam" id="PF07679">
    <property type="entry name" value="I-set"/>
    <property type="match status" value="4"/>
</dbReference>
<dbReference type="Pfam" id="PF13927">
    <property type="entry name" value="Ig_3"/>
    <property type="match status" value="1"/>
</dbReference>
<dbReference type="PRINTS" id="PR00014">
    <property type="entry name" value="FNTYPEIII"/>
</dbReference>
<dbReference type="SMART" id="SM00060">
    <property type="entry name" value="FN3"/>
    <property type="match status" value="3"/>
</dbReference>
<dbReference type="SMART" id="SM00409">
    <property type="entry name" value="IG"/>
    <property type="match status" value="5"/>
</dbReference>
<dbReference type="SMART" id="SM00408">
    <property type="entry name" value="IGc2"/>
    <property type="match status" value="5"/>
</dbReference>
<dbReference type="SMART" id="SM00406">
    <property type="entry name" value="IGv"/>
    <property type="match status" value="2"/>
</dbReference>
<dbReference type="SUPFAM" id="SSF49265">
    <property type="entry name" value="Fibronectin type III"/>
    <property type="match status" value="2"/>
</dbReference>
<dbReference type="SUPFAM" id="SSF48726">
    <property type="entry name" value="Immunoglobulin"/>
    <property type="match status" value="5"/>
</dbReference>
<dbReference type="PROSITE" id="PS50853">
    <property type="entry name" value="FN3"/>
    <property type="match status" value="3"/>
</dbReference>
<dbReference type="PROSITE" id="PS50835">
    <property type="entry name" value="IG_LIKE"/>
    <property type="match status" value="5"/>
</dbReference>
<evidence type="ECO:0000255" key="1"/>
<evidence type="ECO:0000255" key="2">
    <source>
        <dbReference type="PROSITE-ProRule" id="PRU00114"/>
    </source>
</evidence>
<evidence type="ECO:0000255" key="3">
    <source>
        <dbReference type="PROSITE-ProRule" id="PRU00316"/>
    </source>
</evidence>
<evidence type="ECO:0000256" key="4">
    <source>
        <dbReference type="SAM" id="MobiDB-lite"/>
    </source>
</evidence>
<evidence type="ECO:0000269" key="5">
    <source>
    </source>
</evidence>
<evidence type="ECO:0000269" key="6">
    <source>
    </source>
</evidence>
<evidence type="ECO:0000269" key="7">
    <source>
    </source>
</evidence>
<evidence type="ECO:0000305" key="8"/>
<evidence type="ECO:0000312" key="9">
    <source>
        <dbReference type="WormBase" id="ZK377.2a"/>
    </source>
</evidence>
<evidence type="ECO:0000312" key="10">
    <source>
        <dbReference type="WormBase" id="ZK377.2b"/>
    </source>
</evidence>
<protein>
    <recommendedName>
        <fullName>Protein sax-3</fullName>
    </recommendedName>
    <alternativeName>
        <fullName>Sensory axon guidance 3</fullName>
    </alternativeName>
</protein>
<proteinExistence type="evidence at transcript level"/>
<sequence length="1273" mass="139428">MFNRKTLLCTILLVLQAVIRSFCEDASNLAPVIIEHPIDVVVSRGSPATLNCGAKPSTAKITWYKDGQPVITNKEQVNSHRIVLDTGSLFLLKVNSGKNGKDSDAGAYYCVASNEHGEVKSNEGSLKLAMLREDFRVRPRTVQALGGEMAVLECSPPRGFPEPVVSWRKDDKELRIQDMPRYTLHSDGNLIIDPVDRSDSGTYQCVANNMVGERVSNPARLSVFEKPKFEQEPKDMTVDVGAAVLFDCRVTGDPQPQITWKRKNEPMPVTRAYIAKDNRGLRIERVQPSDEGEYVCYARNPAGTLEASAHLRVQAPPSFQTKPADQSVPAGGTATFECTLVGQPSPAYFWSKEGQQDLLFPSYVSADGRTKVSPTGTLTIEEVRQVDEGAYVCAGMNSAGSSLSKAALKVTTKAVTGNTPAKPPPTIEHGHQNQTLMVGSSAILPCQASGKPTPGISWLRDGLPIDITDSRISQHSTGSLHIADLKKPDTGVYTCIAKNEDGESTWSASLTVEDHTSNAQFVRMPDPSNFPSSPTQPIIVNVTDTEVELHWNAPSTSGAGPITGYIIQYYSPDLGQTWFNIPDYVASTEYRIKGLKPSHSYMFVIRAENEKGIGTPSVSSALVTTSKPAAQVALSDKNKMDMAIAEKRLTSEQLIKLEEVKTINSTAVRLFWKKRKLEELIDGYYIKWRGPPRTNDNQYVNVTSPSTENYVVSNLMPFTNYEFFVIPYHSGVHSIHGAPSNSMDVLTAEAPPSLPPEDVRIRMLNLTTLRISWKAPKADGINGILKGFQIVIVGQAPNNNRNITTNERAASVTLFHLVTGMTYKIRVAARSNGGVGVSHGTSEVIMNQDTLEKHLAAQQENESFLYGLINKSHVPVIVIVAILIIFVVIIIAYCYWRNSRNSDGKDRSFIKINDGSVHMASNNLWDVAQNPNQNPMYNTAGRMTMNNRNGQALYSLTPNAQDFFNNCDDYSGTMHRPGSEHHYHYAQLTGGPGNAMSTFYGNQYHDDPSPYATTTLVLSNQQPAWLNDKMLRAPAMPTNPVPPEPPARYADHTAGRRSRSSRASDGRGTLNGGLHHRTSGSQRSDSPPHTDVSYVQLHSSDGTGSSKERTGERRTPPNKTLMDFIPPPPSNPPPPGGHVYDDIFQTATRRQLNRGSTPREDTYDSVSDGAFARVDVNARPTSRNRNLGGRPLKGKRDDDSQRSSLMMDDDGGSSEADGENSEGDVPRGGVRKAVPRMGISASTLAHSCYGTNGTAQRFRSIPRNNGIVTQEQT</sequence>
<reference key="1">
    <citation type="journal article" date="1998" name="Cell">
        <title>The conserved immunoglobulin superfamily member SAX-3/Robo directs multiple aspects of axon guidance in C. elegans.</title>
        <authorList>
            <person name="Zallen J.A."/>
            <person name="Yi B.A."/>
            <person name="Bargmann C.I."/>
        </authorList>
    </citation>
    <scope>NUCLEOTIDE SEQUENCE [MRNA]</scope>
    <scope>FUNCTION</scope>
</reference>
<reference key="2">
    <citation type="journal article" date="1998" name="Science">
        <title>Genome sequence of the nematode C. elegans: a platform for investigating biology.</title>
        <authorList>
            <consortium name="The C. elegans sequencing consortium"/>
        </authorList>
    </citation>
    <scope>NUCLEOTIDE SEQUENCE [LARGE SCALE GENOMIC DNA]</scope>
    <source>
        <strain>Bristol N2</strain>
    </source>
</reference>
<reference key="3">
    <citation type="journal article" date="2000" name="Dev. Biol.">
        <title>Mechanisms controlling sex myoblast migration in Caenorhabditis elegans hermaphrodites.</title>
        <authorList>
            <person name="Branda C.S."/>
            <person name="Stern M.J."/>
        </authorList>
    </citation>
    <scope>FUNCTION</scope>
</reference>
<reference key="4">
    <citation type="journal article" date="2017" name="Elife">
        <title>Multiple conserved cell adhesion protein interactions mediate neural wiring of a sensory circuit in C. elegans.</title>
        <authorList>
            <person name="Kim B."/>
            <person name="Emmons S.W."/>
        </authorList>
    </citation>
    <scope>TISSUE SPECIFICITY</scope>
</reference>